<protein>
    <recommendedName>
        <fullName evidence="1">Acetylornithine deacetylase</fullName>
        <shortName evidence="1">AO</shortName>
        <shortName evidence="1">Acetylornithinase</shortName>
        <ecNumber evidence="1">3.5.1.16</ecNumber>
    </recommendedName>
    <alternativeName>
        <fullName evidence="1">N-acetylornithinase</fullName>
        <shortName evidence="1">NAO</shortName>
    </alternativeName>
</protein>
<reference key="1">
    <citation type="journal article" date="2009" name="J. Bacteriol.">
        <title>Genomic sequencing reveals regulatory mutations and recombinational events in the widely used MC4100 lineage of Escherichia coli K-12.</title>
        <authorList>
            <person name="Ferenci T."/>
            <person name="Zhou Z."/>
            <person name="Betteridge T."/>
            <person name="Ren Y."/>
            <person name="Liu Y."/>
            <person name="Feng L."/>
            <person name="Reeves P.R."/>
            <person name="Wang L."/>
        </authorList>
    </citation>
    <scope>NUCLEOTIDE SEQUENCE [LARGE SCALE GENOMIC DNA]</scope>
    <source>
        <strain>K12 / MC4100 / BW2952</strain>
    </source>
</reference>
<evidence type="ECO:0000255" key="1">
    <source>
        <dbReference type="HAMAP-Rule" id="MF_01108"/>
    </source>
</evidence>
<dbReference type="EC" id="3.5.1.16" evidence="1"/>
<dbReference type="EMBL" id="CP001396">
    <property type="protein sequence ID" value="ACR61915.1"/>
    <property type="molecule type" value="Genomic_DNA"/>
</dbReference>
<dbReference type="RefSeq" id="WP_001298964.1">
    <property type="nucleotide sequence ID" value="NC_012759.1"/>
</dbReference>
<dbReference type="SMR" id="C5A0C3"/>
<dbReference type="MEROPS" id="M20.974"/>
<dbReference type="KEGG" id="ebw:BWG_3625"/>
<dbReference type="HOGENOM" id="CLU_021802_2_4_6"/>
<dbReference type="UniPathway" id="UPA00068">
    <property type="reaction ID" value="UER00110"/>
</dbReference>
<dbReference type="GO" id="GO:0005737">
    <property type="term" value="C:cytoplasm"/>
    <property type="evidence" value="ECO:0007669"/>
    <property type="project" value="UniProtKB-SubCell"/>
</dbReference>
<dbReference type="GO" id="GO:0008777">
    <property type="term" value="F:acetylornithine deacetylase activity"/>
    <property type="evidence" value="ECO:0007669"/>
    <property type="project" value="UniProtKB-UniRule"/>
</dbReference>
<dbReference type="GO" id="GO:0008270">
    <property type="term" value="F:zinc ion binding"/>
    <property type="evidence" value="ECO:0007669"/>
    <property type="project" value="UniProtKB-UniRule"/>
</dbReference>
<dbReference type="GO" id="GO:0006526">
    <property type="term" value="P:L-arginine biosynthetic process"/>
    <property type="evidence" value="ECO:0007669"/>
    <property type="project" value="UniProtKB-UniRule"/>
</dbReference>
<dbReference type="CDD" id="cd03894">
    <property type="entry name" value="M20_ArgE"/>
    <property type="match status" value="1"/>
</dbReference>
<dbReference type="FunFam" id="3.30.70.360:FF:000003">
    <property type="entry name" value="Acetylornithine deacetylase"/>
    <property type="match status" value="1"/>
</dbReference>
<dbReference type="Gene3D" id="3.30.70.360">
    <property type="match status" value="1"/>
</dbReference>
<dbReference type="Gene3D" id="3.40.630.10">
    <property type="entry name" value="Zn peptidases"/>
    <property type="match status" value="1"/>
</dbReference>
<dbReference type="HAMAP" id="MF_01108">
    <property type="entry name" value="ArgE"/>
    <property type="match status" value="1"/>
</dbReference>
<dbReference type="InterPro" id="IPR010169">
    <property type="entry name" value="AcOrn-deacetyl"/>
</dbReference>
<dbReference type="InterPro" id="IPR001261">
    <property type="entry name" value="ArgE/DapE_CS"/>
</dbReference>
<dbReference type="InterPro" id="IPR036264">
    <property type="entry name" value="Bact_exopeptidase_dim_dom"/>
</dbReference>
<dbReference type="InterPro" id="IPR002933">
    <property type="entry name" value="Peptidase_M20"/>
</dbReference>
<dbReference type="InterPro" id="IPR011650">
    <property type="entry name" value="Peptidase_M20_dimer"/>
</dbReference>
<dbReference type="InterPro" id="IPR050072">
    <property type="entry name" value="Peptidase_M20A"/>
</dbReference>
<dbReference type="NCBIfam" id="TIGR01892">
    <property type="entry name" value="AcOrn-deacetyl"/>
    <property type="match status" value="1"/>
</dbReference>
<dbReference type="NCBIfam" id="NF003474">
    <property type="entry name" value="PRK05111.1"/>
    <property type="match status" value="1"/>
</dbReference>
<dbReference type="PANTHER" id="PTHR43808">
    <property type="entry name" value="ACETYLORNITHINE DEACETYLASE"/>
    <property type="match status" value="1"/>
</dbReference>
<dbReference type="PANTHER" id="PTHR43808:SF1">
    <property type="entry name" value="ACETYLORNITHINE DEACETYLASE"/>
    <property type="match status" value="1"/>
</dbReference>
<dbReference type="Pfam" id="PF07687">
    <property type="entry name" value="M20_dimer"/>
    <property type="match status" value="1"/>
</dbReference>
<dbReference type="Pfam" id="PF01546">
    <property type="entry name" value="Peptidase_M20"/>
    <property type="match status" value="1"/>
</dbReference>
<dbReference type="SUPFAM" id="SSF55031">
    <property type="entry name" value="Bacterial exopeptidase dimerisation domain"/>
    <property type="match status" value="1"/>
</dbReference>
<dbReference type="SUPFAM" id="SSF53187">
    <property type="entry name" value="Zn-dependent exopeptidases"/>
    <property type="match status" value="1"/>
</dbReference>
<dbReference type="PROSITE" id="PS00758">
    <property type="entry name" value="ARGE_DAPE_CPG2_1"/>
    <property type="match status" value="1"/>
</dbReference>
<dbReference type="PROSITE" id="PS00759">
    <property type="entry name" value="ARGE_DAPE_CPG2_2"/>
    <property type="match status" value="1"/>
</dbReference>
<feature type="chain" id="PRO_1000213561" description="Acetylornithine deacetylase">
    <location>
        <begin position="1"/>
        <end position="383"/>
    </location>
</feature>
<feature type="active site" evidence="1">
    <location>
        <position position="82"/>
    </location>
</feature>
<feature type="active site" evidence="1">
    <location>
        <position position="144"/>
    </location>
</feature>
<feature type="binding site" evidence="1">
    <location>
        <position position="80"/>
    </location>
    <ligand>
        <name>Zn(2+)</name>
        <dbReference type="ChEBI" id="CHEBI:29105"/>
        <label>1</label>
    </ligand>
</feature>
<feature type="binding site" evidence="1">
    <location>
        <position position="112"/>
    </location>
    <ligand>
        <name>Zn(2+)</name>
        <dbReference type="ChEBI" id="CHEBI:29105"/>
        <label>1</label>
    </ligand>
</feature>
<feature type="binding site" evidence="1">
    <location>
        <position position="112"/>
    </location>
    <ligand>
        <name>Zn(2+)</name>
        <dbReference type="ChEBI" id="CHEBI:29105"/>
        <label>2</label>
    </ligand>
</feature>
<feature type="binding site" evidence="1">
    <location>
        <position position="145"/>
    </location>
    <ligand>
        <name>Zn(2+)</name>
        <dbReference type="ChEBI" id="CHEBI:29105"/>
        <label>2</label>
    </ligand>
</feature>
<feature type="binding site" evidence="1">
    <location>
        <position position="169"/>
    </location>
    <ligand>
        <name>Zn(2+)</name>
        <dbReference type="ChEBI" id="CHEBI:29105"/>
        <label>1</label>
    </ligand>
</feature>
<feature type="binding site" evidence="1">
    <location>
        <position position="355"/>
    </location>
    <ligand>
        <name>Zn(2+)</name>
        <dbReference type="ChEBI" id="CHEBI:29105"/>
        <label>2</label>
    </ligand>
</feature>
<sequence>MKNKLPPFIEIYRALIATPSISATEEALDQSNADLITLLADWFKDLGFNVEVQPVPGTRNKFNMLASIGQGAGGLLLAGHTDTVPFDDGRWTRDPFTLTEHDGKLYGLGTADMKGFFAFILDALRDVDVTKLKKPLYILATADEETSMAGARYFAETTALRPDCAIIGEPTSLQPVRAHKGHISNAIRIQGQSGHSSDPARGVNAIELMHDAIGHILQLRDNLKERYHYEAFTVPYPTLNLGHIHGGDASNRICACCELHMDIRPLPGMTLNELNGLLNDALAPVSERWPGRLTVDELHPPIPGYECPPNHQLVEVVEKLLGAKTEVVNYCTEAPFIQTLCPTLVLGPGSINQAHQPDEYLETRFIKPTRELITQVIHHFCWH</sequence>
<comment type="function">
    <text evidence="1">Catalyzes the hydrolysis of the amide bond of N(2)-acetylated L-amino acids. Cleaves the acetyl group from N-acetyl-L-ornithine to form L-ornithine, an intermediate in L-arginine biosynthesis pathway, and a branchpoint in the synthesis of polyamines.</text>
</comment>
<comment type="catalytic activity">
    <reaction evidence="1">
        <text>N(2)-acetyl-L-ornithine + H2O = L-ornithine + acetate</text>
        <dbReference type="Rhea" id="RHEA:15941"/>
        <dbReference type="ChEBI" id="CHEBI:15377"/>
        <dbReference type="ChEBI" id="CHEBI:30089"/>
        <dbReference type="ChEBI" id="CHEBI:46911"/>
        <dbReference type="ChEBI" id="CHEBI:57805"/>
        <dbReference type="EC" id="3.5.1.16"/>
    </reaction>
</comment>
<comment type="cofactor">
    <cofactor evidence="1">
        <name>Zn(2+)</name>
        <dbReference type="ChEBI" id="CHEBI:29105"/>
    </cofactor>
    <cofactor evidence="1">
        <name>Co(2+)</name>
        <dbReference type="ChEBI" id="CHEBI:48828"/>
    </cofactor>
    <text evidence="1">Binds 2 Zn(2+) or Co(2+) ions per subunit.</text>
</comment>
<comment type="cofactor">
    <cofactor evidence="1">
        <name>glutathione</name>
        <dbReference type="ChEBI" id="CHEBI:57925"/>
    </cofactor>
</comment>
<comment type="pathway">
    <text evidence="1">Amino-acid biosynthesis; L-arginine biosynthesis; L-ornithine from N(2)-acetyl-L-ornithine (linear): step 1/1.</text>
</comment>
<comment type="subunit">
    <text evidence="1">Homodimer.</text>
</comment>
<comment type="subcellular location">
    <subcellularLocation>
        <location evidence="1">Cytoplasm</location>
    </subcellularLocation>
</comment>
<comment type="similarity">
    <text evidence="1">Belongs to the peptidase M20A family. ArgE subfamily.</text>
</comment>
<gene>
    <name evidence="1" type="primary">argE</name>
    <name type="ordered locus">BWG_3625</name>
</gene>
<accession>C5A0C3</accession>
<keyword id="KW-0028">Amino-acid biosynthesis</keyword>
<keyword id="KW-0055">Arginine biosynthesis</keyword>
<keyword id="KW-0170">Cobalt</keyword>
<keyword id="KW-0963">Cytoplasm</keyword>
<keyword id="KW-0378">Hydrolase</keyword>
<keyword id="KW-0479">Metal-binding</keyword>
<keyword id="KW-0862">Zinc</keyword>
<proteinExistence type="inferred from homology"/>
<name>ARGE_ECOBW</name>
<organism>
    <name type="scientific">Escherichia coli (strain K12 / MC4100 / BW2952)</name>
    <dbReference type="NCBI Taxonomy" id="595496"/>
    <lineage>
        <taxon>Bacteria</taxon>
        <taxon>Pseudomonadati</taxon>
        <taxon>Pseudomonadota</taxon>
        <taxon>Gammaproteobacteria</taxon>
        <taxon>Enterobacterales</taxon>
        <taxon>Enterobacteriaceae</taxon>
        <taxon>Escherichia</taxon>
    </lineage>
</organism>